<proteinExistence type="inferred from homology"/>
<accession>B6JKN2</accession>
<name>OBG_HELP2</name>
<organism>
    <name type="scientific">Helicobacter pylori (strain P12)</name>
    <dbReference type="NCBI Taxonomy" id="570508"/>
    <lineage>
        <taxon>Bacteria</taxon>
        <taxon>Pseudomonadati</taxon>
        <taxon>Campylobacterota</taxon>
        <taxon>Epsilonproteobacteria</taxon>
        <taxon>Campylobacterales</taxon>
        <taxon>Helicobacteraceae</taxon>
        <taxon>Helicobacter</taxon>
    </lineage>
</organism>
<feature type="chain" id="PRO_0000385975" description="GTPase Obg">
    <location>
        <begin position="1"/>
        <end position="360"/>
    </location>
</feature>
<feature type="domain" description="Obg" evidence="2">
    <location>
        <begin position="1"/>
        <end position="156"/>
    </location>
</feature>
<feature type="domain" description="OBG-type G" evidence="1">
    <location>
        <begin position="157"/>
        <end position="360"/>
    </location>
</feature>
<feature type="binding site" evidence="1">
    <location>
        <begin position="163"/>
        <end position="170"/>
    </location>
    <ligand>
        <name>GTP</name>
        <dbReference type="ChEBI" id="CHEBI:37565"/>
    </ligand>
</feature>
<feature type="binding site" evidence="1">
    <location>
        <position position="170"/>
    </location>
    <ligand>
        <name>Mg(2+)</name>
        <dbReference type="ChEBI" id="CHEBI:18420"/>
    </ligand>
</feature>
<feature type="binding site" evidence="1">
    <location>
        <begin position="188"/>
        <end position="192"/>
    </location>
    <ligand>
        <name>GTP</name>
        <dbReference type="ChEBI" id="CHEBI:37565"/>
    </ligand>
</feature>
<feature type="binding site" evidence="1">
    <location>
        <position position="190"/>
    </location>
    <ligand>
        <name>Mg(2+)</name>
        <dbReference type="ChEBI" id="CHEBI:18420"/>
    </ligand>
</feature>
<feature type="binding site" evidence="1">
    <location>
        <begin position="210"/>
        <end position="213"/>
    </location>
    <ligand>
        <name>GTP</name>
        <dbReference type="ChEBI" id="CHEBI:37565"/>
    </ligand>
</feature>
<feature type="binding site" evidence="1">
    <location>
        <begin position="279"/>
        <end position="282"/>
    </location>
    <ligand>
        <name>GTP</name>
        <dbReference type="ChEBI" id="CHEBI:37565"/>
    </ligand>
</feature>
<feature type="binding site" evidence="1">
    <location>
        <begin position="341"/>
        <end position="343"/>
    </location>
    <ligand>
        <name>GTP</name>
        <dbReference type="ChEBI" id="CHEBI:37565"/>
    </ligand>
</feature>
<keyword id="KW-0963">Cytoplasm</keyword>
<keyword id="KW-0342">GTP-binding</keyword>
<keyword id="KW-0378">Hydrolase</keyword>
<keyword id="KW-0460">Magnesium</keyword>
<keyword id="KW-0479">Metal-binding</keyword>
<keyword id="KW-0547">Nucleotide-binding</keyword>
<dbReference type="EC" id="3.6.5.-" evidence="1"/>
<dbReference type="EMBL" id="CP001217">
    <property type="protein sequence ID" value="ACJ07460.1"/>
    <property type="molecule type" value="Genomic_DNA"/>
</dbReference>
<dbReference type="SMR" id="B6JKN2"/>
<dbReference type="KEGG" id="hpp:HPP12_0302"/>
<dbReference type="HOGENOM" id="CLU_011747_2_0_7"/>
<dbReference type="Proteomes" id="UP000008198">
    <property type="component" value="Chromosome"/>
</dbReference>
<dbReference type="GO" id="GO:0005737">
    <property type="term" value="C:cytoplasm"/>
    <property type="evidence" value="ECO:0007669"/>
    <property type="project" value="UniProtKB-SubCell"/>
</dbReference>
<dbReference type="GO" id="GO:0005525">
    <property type="term" value="F:GTP binding"/>
    <property type="evidence" value="ECO:0007669"/>
    <property type="project" value="UniProtKB-UniRule"/>
</dbReference>
<dbReference type="GO" id="GO:0003924">
    <property type="term" value="F:GTPase activity"/>
    <property type="evidence" value="ECO:0007669"/>
    <property type="project" value="UniProtKB-UniRule"/>
</dbReference>
<dbReference type="GO" id="GO:0000287">
    <property type="term" value="F:magnesium ion binding"/>
    <property type="evidence" value="ECO:0007669"/>
    <property type="project" value="InterPro"/>
</dbReference>
<dbReference type="GO" id="GO:0042254">
    <property type="term" value="P:ribosome biogenesis"/>
    <property type="evidence" value="ECO:0007669"/>
    <property type="project" value="UniProtKB-UniRule"/>
</dbReference>
<dbReference type="CDD" id="cd01898">
    <property type="entry name" value="Obg"/>
    <property type="match status" value="1"/>
</dbReference>
<dbReference type="FunFam" id="2.70.210.12:FF:000001">
    <property type="entry name" value="GTPase Obg"/>
    <property type="match status" value="1"/>
</dbReference>
<dbReference type="Gene3D" id="2.70.210.12">
    <property type="entry name" value="GTP1/OBG domain"/>
    <property type="match status" value="1"/>
</dbReference>
<dbReference type="Gene3D" id="3.40.50.300">
    <property type="entry name" value="P-loop containing nucleotide triphosphate hydrolases"/>
    <property type="match status" value="1"/>
</dbReference>
<dbReference type="HAMAP" id="MF_01454">
    <property type="entry name" value="GTPase_Obg"/>
    <property type="match status" value="1"/>
</dbReference>
<dbReference type="InterPro" id="IPR031167">
    <property type="entry name" value="G_OBG"/>
</dbReference>
<dbReference type="InterPro" id="IPR006073">
    <property type="entry name" value="GTP-bd"/>
</dbReference>
<dbReference type="InterPro" id="IPR014100">
    <property type="entry name" value="GTP-bd_Obg/CgtA"/>
</dbReference>
<dbReference type="InterPro" id="IPR006074">
    <property type="entry name" value="GTP1-OBG_CS"/>
</dbReference>
<dbReference type="InterPro" id="IPR006169">
    <property type="entry name" value="GTP1_OBG_dom"/>
</dbReference>
<dbReference type="InterPro" id="IPR036726">
    <property type="entry name" value="GTP1_OBG_dom_sf"/>
</dbReference>
<dbReference type="InterPro" id="IPR045086">
    <property type="entry name" value="OBG_GTPase"/>
</dbReference>
<dbReference type="InterPro" id="IPR027417">
    <property type="entry name" value="P-loop_NTPase"/>
</dbReference>
<dbReference type="NCBIfam" id="TIGR02729">
    <property type="entry name" value="Obg_CgtA"/>
    <property type="match status" value="1"/>
</dbReference>
<dbReference type="NCBIfam" id="NF008955">
    <property type="entry name" value="PRK12297.1"/>
    <property type="match status" value="1"/>
</dbReference>
<dbReference type="NCBIfam" id="NF008956">
    <property type="entry name" value="PRK12299.1"/>
    <property type="match status" value="1"/>
</dbReference>
<dbReference type="PANTHER" id="PTHR11702">
    <property type="entry name" value="DEVELOPMENTALLY REGULATED GTP-BINDING PROTEIN-RELATED"/>
    <property type="match status" value="1"/>
</dbReference>
<dbReference type="PANTHER" id="PTHR11702:SF31">
    <property type="entry name" value="MITOCHONDRIAL RIBOSOME-ASSOCIATED GTPASE 2"/>
    <property type="match status" value="1"/>
</dbReference>
<dbReference type="Pfam" id="PF01018">
    <property type="entry name" value="GTP1_OBG"/>
    <property type="match status" value="1"/>
</dbReference>
<dbReference type="Pfam" id="PF01926">
    <property type="entry name" value="MMR_HSR1"/>
    <property type="match status" value="1"/>
</dbReference>
<dbReference type="PIRSF" id="PIRSF002401">
    <property type="entry name" value="GTP_bd_Obg/CgtA"/>
    <property type="match status" value="1"/>
</dbReference>
<dbReference type="PRINTS" id="PR00326">
    <property type="entry name" value="GTP1OBG"/>
</dbReference>
<dbReference type="SUPFAM" id="SSF82051">
    <property type="entry name" value="Obg GTP-binding protein N-terminal domain"/>
    <property type="match status" value="1"/>
</dbReference>
<dbReference type="SUPFAM" id="SSF52540">
    <property type="entry name" value="P-loop containing nucleoside triphosphate hydrolases"/>
    <property type="match status" value="1"/>
</dbReference>
<dbReference type="PROSITE" id="PS51710">
    <property type="entry name" value="G_OBG"/>
    <property type="match status" value="1"/>
</dbReference>
<dbReference type="PROSITE" id="PS00905">
    <property type="entry name" value="GTP1_OBG"/>
    <property type="match status" value="1"/>
</dbReference>
<dbReference type="PROSITE" id="PS51883">
    <property type="entry name" value="OBG"/>
    <property type="match status" value="1"/>
</dbReference>
<comment type="function">
    <text evidence="1">An essential GTPase which binds GTP, GDP and possibly (p)ppGpp with moderate affinity, with high nucleotide exchange rates and a fairly low GTP hydrolysis rate. Plays a role in control of the cell cycle, stress response, ribosome biogenesis and in those bacteria that undergo differentiation, in morphogenesis control.</text>
</comment>
<comment type="cofactor">
    <cofactor evidence="1">
        <name>Mg(2+)</name>
        <dbReference type="ChEBI" id="CHEBI:18420"/>
    </cofactor>
</comment>
<comment type="subunit">
    <text evidence="1">Monomer.</text>
</comment>
<comment type="subcellular location">
    <subcellularLocation>
        <location evidence="1">Cytoplasm</location>
    </subcellularLocation>
</comment>
<comment type="similarity">
    <text evidence="1">Belongs to the TRAFAC class OBG-HflX-like GTPase superfamily. OBG GTPase family.</text>
</comment>
<sequence length="360" mass="38810">MFVDSVEIIIASGKGGPGMVSFRREKFVIKGGPDGGDGGDGGDVYFEVDNNTDTLASFRGTKHHKAKNGAPGGTRNCTGKKGEDKIIVVPPGTQVFVDDTLWLDLVEPKKRVLALKGGKGGLGNAHFKGATKQQPTYAQKGLEGVEKCVRLELKLIADIGLVGFPNAGKSTLISTISNAKPKIANYEFTTLVPNLGVVSVDEKSGFLMADIPGIIEGASQGKGLGISFLKHIERTKVLAFVLDASRLDLGIKEQYQRLRLELEKFSPALANKPFGVLLNKCDVVENIDKMTRDFCAFLNLEAQKLEAFDLEPYSGFLHPHLTSDFENDPNEKSALFVLPLSAVSALNAHALKFVLLKALQ</sequence>
<gene>
    <name evidence="1" type="primary">obg</name>
    <name type="ordered locus">HPP12_0302</name>
</gene>
<reference key="1">
    <citation type="submission" date="2008-10" db="EMBL/GenBank/DDBJ databases">
        <title>The complete genome sequence of Helicobacter pylori strain P12.</title>
        <authorList>
            <person name="Fischer W."/>
            <person name="Windhager L."/>
            <person name="Karnholz A."/>
            <person name="Zeiller M."/>
            <person name="Zimmer R."/>
            <person name="Haas R."/>
        </authorList>
    </citation>
    <scope>NUCLEOTIDE SEQUENCE [LARGE SCALE GENOMIC DNA]</scope>
    <source>
        <strain>P12</strain>
    </source>
</reference>
<protein>
    <recommendedName>
        <fullName evidence="1">GTPase Obg</fullName>
        <ecNumber evidence="1">3.6.5.-</ecNumber>
    </recommendedName>
    <alternativeName>
        <fullName evidence="1">GTP-binding protein Obg</fullName>
    </alternativeName>
</protein>
<evidence type="ECO:0000255" key="1">
    <source>
        <dbReference type="HAMAP-Rule" id="MF_01454"/>
    </source>
</evidence>
<evidence type="ECO:0000255" key="2">
    <source>
        <dbReference type="PROSITE-ProRule" id="PRU01231"/>
    </source>
</evidence>